<name>RPP30_BOVIN</name>
<sequence length="268" mass="29395">MAVFADLDLRAGSDLKALRGLVENAAHLGYSVVAINHVVEFKEKKQEIEKPVAVSELFTTLPIVQGKSKPIKILTRLTIIVSDPSHCNVLRATSSRVRLYDIVAVFPKTEKLFHVACTHLDVDLVCITVTEKLPFYFKRPPINVAIDRGVGFELLYSPAIKDSTMRRYTISNALNLMQVCKGKNVIISSAAERPLEIRGPYDVANLGLLFGLSESDAKAAVSTNCRAVLLHGETRKTAFGIISTVKKPRTSEADDDSLPACKKAKCES</sequence>
<evidence type="ECO:0000250" key="1"/>
<evidence type="ECO:0000250" key="2">
    <source>
        <dbReference type="UniProtKB" id="P78346"/>
    </source>
</evidence>
<evidence type="ECO:0000305" key="3"/>
<reference key="1">
    <citation type="submission" date="2005-08" db="EMBL/GenBank/DDBJ databases">
        <authorList>
            <consortium name="NIH - Mammalian Gene Collection (MGC) project"/>
        </authorList>
    </citation>
    <scope>NUCLEOTIDE SEQUENCE [LARGE SCALE MRNA]</scope>
    <source>
        <strain>Hereford</strain>
        <tissue>Thymus</tissue>
    </source>
</reference>
<protein>
    <recommendedName>
        <fullName>Ribonuclease P protein subunit p30</fullName>
        <shortName>RNaseP protein p30</shortName>
    </recommendedName>
    <alternativeName>
        <fullName>RNase P subunit 2</fullName>
    </alternativeName>
</protein>
<feature type="initiator methionine" description="Removed" evidence="2">
    <location>
        <position position="1"/>
    </location>
</feature>
<feature type="chain" id="PRO_0000236681" description="Ribonuclease P protein subunit p30">
    <location>
        <begin position="2"/>
        <end position="268"/>
    </location>
</feature>
<feature type="modified residue" description="N-acetylalanine" evidence="2">
    <location>
        <position position="2"/>
    </location>
</feature>
<feature type="modified residue" description="Phosphoserine" evidence="2">
    <location>
        <position position="251"/>
    </location>
</feature>
<organism>
    <name type="scientific">Bos taurus</name>
    <name type="common">Bovine</name>
    <dbReference type="NCBI Taxonomy" id="9913"/>
    <lineage>
        <taxon>Eukaryota</taxon>
        <taxon>Metazoa</taxon>
        <taxon>Chordata</taxon>
        <taxon>Craniata</taxon>
        <taxon>Vertebrata</taxon>
        <taxon>Euteleostomi</taxon>
        <taxon>Mammalia</taxon>
        <taxon>Eutheria</taxon>
        <taxon>Laurasiatheria</taxon>
        <taxon>Artiodactyla</taxon>
        <taxon>Ruminantia</taxon>
        <taxon>Pecora</taxon>
        <taxon>Bovidae</taxon>
        <taxon>Bovinae</taxon>
        <taxon>Bos</taxon>
    </lineage>
</organism>
<comment type="function">
    <text evidence="2">Component of ribonuclease P, a ribonucleoprotein complex that generates mature tRNA molecules by cleaving their 5'-ends. Also a component of the MRP ribonuclease complex, which cleaves pre-rRNA sequences.</text>
</comment>
<comment type="subunit">
    <text evidence="2">Component of nuclear RNase P and RNase MRP ribonucleoproteins. RNase P consists of a catalytic RNA moiety and about 10 protein subunits; POP1, POP4, POP5, POP7, RPP14, RPP21, RPP25, RPP30, RPP38 and RPP40. Within the RNase P complex, POP1, POP7 and RPP25 form the 'finger' subcomplex, POP5, RPP14, RPP40 and homodimeric RPP30 form the 'palm' subcomplex, and RPP21, POP4 and RPP38 form the 'wrist' subcomplex. All subunits of the RNase P complex interact with the catalytic RNA. Several subunits of RNase P are also part of the RNase MRP complex. RNase MRP consists of a catalytic RNA moiety and about 8 protein subunits; POP1, POP7, RPP25, RPP30, RPP38, RPP40 and possibly also POP4 and POP5.</text>
</comment>
<comment type="subcellular location">
    <subcellularLocation>
        <location evidence="1">Nucleus</location>
        <location evidence="1">Nucleolus</location>
    </subcellularLocation>
</comment>
<comment type="similarity">
    <text evidence="3">Belongs to the eukaryotic/archaeal RNase P protein component 3 family.</text>
</comment>
<proteinExistence type="evidence at transcript level"/>
<gene>
    <name type="primary">RPP30</name>
    <name type="synonym">RNASEP2</name>
</gene>
<keyword id="KW-0007">Acetylation</keyword>
<keyword id="KW-0539">Nucleus</keyword>
<keyword id="KW-0597">Phosphoprotein</keyword>
<keyword id="KW-1185">Reference proteome</keyword>
<keyword id="KW-0698">rRNA processing</keyword>
<keyword id="KW-0819">tRNA processing</keyword>
<accession>Q3SZ21</accession>
<dbReference type="EMBL" id="BC103240">
    <property type="protein sequence ID" value="AAI03241.1"/>
    <property type="molecule type" value="mRNA"/>
</dbReference>
<dbReference type="RefSeq" id="NP_001030538.1">
    <property type="nucleotide sequence ID" value="NM_001035461.1"/>
</dbReference>
<dbReference type="SMR" id="Q3SZ21"/>
<dbReference type="FunCoup" id="Q3SZ21">
    <property type="interactions" value="3108"/>
</dbReference>
<dbReference type="STRING" id="9913.ENSBTAP00000003871"/>
<dbReference type="PaxDb" id="9913-ENSBTAP00000003871"/>
<dbReference type="Ensembl" id="ENSBTAT00000003871.5">
    <property type="protein sequence ID" value="ENSBTAP00000003871.4"/>
    <property type="gene ID" value="ENSBTAG00000002973.5"/>
</dbReference>
<dbReference type="GeneID" id="615098"/>
<dbReference type="KEGG" id="bta:615098"/>
<dbReference type="CTD" id="10556"/>
<dbReference type="VEuPathDB" id="HostDB:ENSBTAG00000002973"/>
<dbReference type="VGNC" id="VGNC:34123">
    <property type="gene designation" value="RPP30"/>
</dbReference>
<dbReference type="eggNOG" id="KOG2363">
    <property type="taxonomic scope" value="Eukaryota"/>
</dbReference>
<dbReference type="GeneTree" id="ENSGT00390000000883"/>
<dbReference type="InParanoid" id="Q3SZ21"/>
<dbReference type="OMA" id="CYGPGIT"/>
<dbReference type="OrthoDB" id="17948at2759"/>
<dbReference type="Reactome" id="R-BTA-6791226">
    <property type="pathway name" value="Major pathway of rRNA processing in the nucleolus and cytosol"/>
</dbReference>
<dbReference type="CD-CODE" id="D7FE2080">
    <property type="entry name" value="Nucleolus"/>
</dbReference>
<dbReference type="Proteomes" id="UP000009136">
    <property type="component" value="Chromosome 26"/>
</dbReference>
<dbReference type="Bgee" id="ENSBTAG00000002973">
    <property type="expression patterns" value="Expressed in oocyte and 108 other cell types or tissues"/>
</dbReference>
<dbReference type="GO" id="GO:0005655">
    <property type="term" value="C:nucleolar ribonuclease P complex"/>
    <property type="evidence" value="ECO:0000318"/>
    <property type="project" value="GO_Central"/>
</dbReference>
<dbReference type="GO" id="GO:0000172">
    <property type="term" value="C:ribonuclease MRP complex"/>
    <property type="evidence" value="ECO:0007669"/>
    <property type="project" value="Ensembl"/>
</dbReference>
<dbReference type="GO" id="GO:0004526">
    <property type="term" value="F:ribonuclease P activity"/>
    <property type="evidence" value="ECO:0007669"/>
    <property type="project" value="UniProtKB-EC"/>
</dbReference>
<dbReference type="GO" id="GO:0033204">
    <property type="term" value="F:ribonuclease P RNA binding"/>
    <property type="evidence" value="ECO:0007669"/>
    <property type="project" value="Ensembl"/>
</dbReference>
<dbReference type="GO" id="GO:0003723">
    <property type="term" value="F:RNA binding"/>
    <property type="evidence" value="ECO:0000318"/>
    <property type="project" value="GO_Central"/>
</dbReference>
<dbReference type="GO" id="GO:0006364">
    <property type="term" value="P:rRNA processing"/>
    <property type="evidence" value="ECO:0007669"/>
    <property type="project" value="UniProtKB-KW"/>
</dbReference>
<dbReference type="GO" id="GO:0001682">
    <property type="term" value="P:tRNA 5'-leader removal"/>
    <property type="evidence" value="ECO:0007669"/>
    <property type="project" value="Ensembl"/>
</dbReference>
<dbReference type="GO" id="GO:0008033">
    <property type="term" value="P:tRNA processing"/>
    <property type="evidence" value="ECO:0000318"/>
    <property type="project" value="GO_Central"/>
</dbReference>
<dbReference type="FunFam" id="3.20.20.140:FF:000031">
    <property type="entry name" value="ribonuclease P protein subunit p30"/>
    <property type="match status" value="1"/>
</dbReference>
<dbReference type="Gene3D" id="3.20.20.140">
    <property type="entry name" value="Metal-dependent hydrolases"/>
    <property type="match status" value="1"/>
</dbReference>
<dbReference type="InterPro" id="IPR016195">
    <property type="entry name" value="Pol/histidinol_Pase-like"/>
</dbReference>
<dbReference type="InterPro" id="IPR002738">
    <property type="entry name" value="RNase_P_p30"/>
</dbReference>
<dbReference type="PANTHER" id="PTHR13031:SF0">
    <property type="entry name" value="RIBONUCLEASE P PROTEIN SUBUNIT P30"/>
    <property type="match status" value="1"/>
</dbReference>
<dbReference type="PANTHER" id="PTHR13031">
    <property type="entry name" value="RIBONUCLEASE P SUBUNIT P30"/>
    <property type="match status" value="1"/>
</dbReference>
<dbReference type="Pfam" id="PF01876">
    <property type="entry name" value="RNase_P_p30"/>
    <property type="match status" value="1"/>
</dbReference>
<dbReference type="SUPFAM" id="SSF89550">
    <property type="entry name" value="PHP domain-like"/>
    <property type="match status" value="1"/>
</dbReference>